<protein>
    <recommendedName>
        <fullName evidence="1">Ribosomal RNA small subunit methyltransferase H</fullName>
        <ecNumber evidence="1">2.1.1.199</ecNumber>
    </recommendedName>
    <alternativeName>
        <fullName evidence="1">16S rRNA m(4)C1402 methyltransferase</fullName>
    </alternativeName>
    <alternativeName>
        <fullName evidence="1">rRNA (cytosine-N(4)-)-methyltransferase RsmH</fullName>
    </alternativeName>
</protein>
<feature type="chain" id="PRO_0000387188" description="Ribosomal RNA small subunit methyltransferase H">
    <location>
        <begin position="1"/>
        <end position="308"/>
    </location>
</feature>
<feature type="region of interest" description="Disordered" evidence="2">
    <location>
        <begin position="289"/>
        <end position="308"/>
    </location>
</feature>
<feature type="binding site" evidence="1">
    <location>
        <begin position="33"/>
        <end position="35"/>
    </location>
    <ligand>
        <name>S-adenosyl-L-methionine</name>
        <dbReference type="ChEBI" id="CHEBI:59789"/>
    </ligand>
</feature>
<feature type="binding site" evidence="1">
    <location>
        <position position="52"/>
    </location>
    <ligand>
        <name>S-adenosyl-L-methionine</name>
        <dbReference type="ChEBI" id="CHEBI:59789"/>
    </ligand>
</feature>
<feature type="binding site" evidence="1">
    <location>
        <position position="78"/>
    </location>
    <ligand>
        <name>S-adenosyl-L-methionine</name>
        <dbReference type="ChEBI" id="CHEBI:59789"/>
    </ligand>
</feature>
<feature type="binding site" evidence="1">
    <location>
        <position position="99"/>
    </location>
    <ligand>
        <name>S-adenosyl-L-methionine</name>
        <dbReference type="ChEBI" id="CHEBI:59789"/>
    </ligand>
</feature>
<feature type="binding site" evidence="1">
    <location>
        <position position="106"/>
    </location>
    <ligand>
        <name>S-adenosyl-L-methionine</name>
        <dbReference type="ChEBI" id="CHEBI:59789"/>
    </ligand>
</feature>
<organism>
    <name type="scientific">Thermoanaerobacter sp. (strain X514)</name>
    <dbReference type="NCBI Taxonomy" id="399726"/>
    <lineage>
        <taxon>Bacteria</taxon>
        <taxon>Bacillati</taxon>
        <taxon>Bacillota</taxon>
        <taxon>Clostridia</taxon>
        <taxon>Thermoanaerobacterales</taxon>
        <taxon>Thermoanaerobacteraceae</taxon>
        <taxon>Thermoanaerobacter</taxon>
    </lineage>
</organism>
<dbReference type="EC" id="2.1.1.199" evidence="1"/>
<dbReference type="EMBL" id="CP000923">
    <property type="protein sequence ID" value="ABY93289.1"/>
    <property type="molecule type" value="Genomic_DNA"/>
</dbReference>
<dbReference type="RefSeq" id="WP_003868863.1">
    <property type="nucleotide sequence ID" value="NC_010320.1"/>
</dbReference>
<dbReference type="SMR" id="B0K3H8"/>
<dbReference type="KEGG" id="tex:Teth514_2017"/>
<dbReference type="HOGENOM" id="CLU_038422_2_0_9"/>
<dbReference type="Proteomes" id="UP000002155">
    <property type="component" value="Chromosome"/>
</dbReference>
<dbReference type="GO" id="GO:0005737">
    <property type="term" value="C:cytoplasm"/>
    <property type="evidence" value="ECO:0007669"/>
    <property type="project" value="UniProtKB-SubCell"/>
</dbReference>
<dbReference type="GO" id="GO:0071424">
    <property type="term" value="F:rRNA (cytosine-N4-)-methyltransferase activity"/>
    <property type="evidence" value="ECO:0007669"/>
    <property type="project" value="UniProtKB-UniRule"/>
</dbReference>
<dbReference type="GO" id="GO:0070475">
    <property type="term" value="P:rRNA base methylation"/>
    <property type="evidence" value="ECO:0007669"/>
    <property type="project" value="UniProtKB-UniRule"/>
</dbReference>
<dbReference type="FunFam" id="1.10.150.170:FF:000001">
    <property type="entry name" value="Ribosomal RNA small subunit methyltransferase H"/>
    <property type="match status" value="1"/>
</dbReference>
<dbReference type="Gene3D" id="1.10.150.170">
    <property type="entry name" value="Putative methyltransferase TM0872, insert domain"/>
    <property type="match status" value="1"/>
</dbReference>
<dbReference type="Gene3D" id="3.40.50.150">
    <property type="entry name" value="Vaccinia Virus protein VP39"/>
    <property type="match status" value="1"/>
</dbReference>
<dbReference type="HAMAP" id="MF_01007">
    <property type="entry name" value="16SrRNA_methyltr_H"/>
    <property type="match status" value="1"/>
</dbReference>
<dbReference type="InterPro" id="IPR002903">
    <property type="entry name" value="RsmH"/>
</dbReference>
<dbReference type="InterPro" id="IPR023397">
    <property type="entry name" value="SAM-dep_MeTrfase_MraW_recog"/>
</dbReference>
<dbReference type="InterPro" id="IPR029063">
    <property type="entry name" value="SAM-dependent_MTases_sf"/>
</dbReference>
<dbReference type="NCBIfam" id="TIGR00006">
    <property type="entry name" value="16S rRNA (cytosine(1402)-N(4))-methyltransferase RsmH"/>
    <property type="match status" value="1"/>
</dbReference>
<dbReference type="PANTHER" id="PTHR11265:SF0">
    <property type="entry name" value="12S RRNA N4-METHYLCYTIDINE METHYLTRANSFERASE"/>
    <property type="match status" value="1"/>
</dbReference>
<dbReference type="PANTHER" id="PTHR11265">
    <property type="entry name" value="S-ADENOSYL-METHYLTRANSFERASE MRAW"/>
    <property type="match status" value="1"/>
</dbReference>
<dbReference type="Pfam" id="PF01795">
    <property type="entry name" value="Methyltransf_5"/>
    <property type="match status" value="1"/>
</dbReference>
<dbReference type="PIRSF" id="PIRSF004486">
    <property type="entry name" value="MraW"/>
    <property type="match status" value="1"/>
</dbReference>
<dbReference type="SUPFAM" id="SSF81799">
    <property type="entry name" value="Putative methyltransferase TM0872, insert domain"/>
    <property type="match status" value="1"/>
</dbReference>
<dbReference type="SUPFAM" id="SSF53335">
    <property type="entry name" value="S-adenosyl-L-methionine-dependent methyltransferases"/>
    <property type="match status" value="1"/>
</dbReference>
<keyword id="KW-0963">Cytoplasm</keyword>
<keyword id="KW-0489">Methyltransferase</keyword>
<keyword id="KW-0698">rRNA processing</keyword>
<keyword id="KW-0949">S-adenosyl-L-methionine</keyword>
<keyword id="KW-0808">Transferase</keyword>
<accession>B0K3H8</accession>
<evidence type="ECO:0000255" key="1">
    <source>
        <dbReference type="HAMAP-Rule" id="MF_01007"/>
    </source>
</evidence>
<evidence type="ECO:0000256" key="2">
    <source>
        <dbReference type="SAM" id="MobiDB-lite"/>
    </source>
</evidence>
<proteinExistence type="inferred from homology"/>
<comment type="function">
    <text evidence="1">Specifically methylates the N4 position of cytidine in position 1402 (C1402) of 16S rRNA.</text>
</comment>
<comment type="catalytic activity">
    <reaction evidence="1">
        <text>cytidine(1402) in 16S rRNA + S-adenosyl-L-methionine = N(4)-methylcytidine(1402) in 16S rRNA + S-adenosyl-L-homocysteine + H(+)</text>
        <dbReference type="Rhea" id="RHEA:42928"/>
        <dbReference type="Rhea" id="RHEA-COMP:10286"/>
        <dbReference type="Rhea" id="RHEA-COMP:10287"/>
        <dbReference type="ChEBI" id="CHEBI:15378"/>
        <dbReference type="ChEBI" id="CHEBI:57856"/>
        <dbReference type="ChEBI" id="CHEBI:59789"/>
        <dbReference type="ChEBI" id="CHEBI:74506"/>
        <dbReference type="ChEBI" id="CHEBI:82748"/>
        <dbReference type="EC" id="2.1.1.199"/>
    </reaction>
</comment>
<comment type="subcellular location">
    <subcellularLocation>
        <location evidence="1">Cytoplasm</location>
    </subcellularLocation>
</comment>
<comment type="similarity">
    <text evidence="1">Belongs to the methyltransferase superfamily. RsmH family.</text>
</comment>
<gene>
    <name evidence="1" type="primary">rsmH</name>
    <name type="synonym">mraW</name>
    <name type="ordered locus">Teth514_2017</name>
</gene>
<name>RSMH_THEPX</name>
<sequence>MEYSHKSVLLKETIEYLNIKPEGIYVDGTLGGGGHSEEILKRLTTGKLIAIDRDLDAIKASKERLKNYKNVEYINDNFKNIKEILKSLNIDKVDGILLDLGVSSYQLEEVKRGFSYMKDAPMDMRMDKNSPFSAYDVVNKYSQQELERVIREYGEEKWASRIAKFIVKEREKGEIKTTFQLVEIIKNAIPASARREGPHPAKRTFQAIRIEVNEELKGLDKAIEDMVEVLRGKGRIAIITFHSLEDRIVKNTFKKLENPCTCPPNMPCTCGKKPVVKIITKKPVLPSKEEIETNSRSRSAKLRVAEKL</sequence>
<reference key="1">
    <citation type="submission" date="2008-01" db="EMBL/GenBank/DDBJ databases">
        <title>Complete sequence of Thermoanaerobacter sp. X514.</title>
        <authorList>
            <consortium name="US DOE Joint Genome Institute"/>
            <person name="Copeland A."/>
            <person name="Lucas S."/>
            <person name="Lapidus A."/>
            <person name="Barry K."/>
            <person name="Glavina del Rio T."/>
            <person name="Dalin E."/>
            <person name="Tice H."/>
            <person name="Pitluck S."/>
            <person name="Bruce D."/>
            <person name="Goodwin L."/>
            <person name="Saunders E."/>
            <person name="Brettin T."/>
            <person name="Detter J.C."/>
            <person name="Han C."/>
            <person name="Schmutz J."/>
            <person name="Larimer F."/>
            <person name="Land M."/>
            <person name="Hauser L."/>
            <person name="Kyrpides N."/>
            <person name="Kim E."/>
            <person name="Hemme C."/>
            <person name="Fields M.W."/>
            <person name="He Z."/>
            <person name="Zhou J."/>
            <person name="Richardson P."/>
        </authorList>
    </citation>
    <scope>NUCLEOTIDE SEQUENCE [LARGE SCALE GENOMIC DNA]</scope>
    <source>
        <strain>X514</strain>
    </source>
</reference>